<evidence type="ECO:0000255" key="1">
    <source>
        <dbReference type="HAMAP-Rule" id="MF_00375"/>
    </source>
</evidence>
<evidence type="ECO:0000305" key="2"/>
<proteinExistence type="inferred from homology"/>
<reference key="1">
    <citation type="journal article" date="2002" name="Proc. Natl. Acad. Sci. U.S.A.">
        <title>Complete genome sequence of Clostridium perfringens, an anaerobic flesh-eater.</title>
        <authorList>
            <person name="Shimizu T."/>
            <person name="Ohtani K."/>
            <person name="Hirakawa H."/>
            <person name="Ohshima K."/>
            <person name="Yamashita A."/>
            <person name="Shiba T."/>
            <person name="Ogasawara N."/>
            <person name="Hattori M."/>
            <person name="Kuhara S."/>
            <person name="Hayashi H."/>
        </authorList>
    </citation>
    <scope>NUCLEOTIDE SEQUENCE [LARGE SCALE GENOMIC DNA]</scope>
    <source>
        <strain>13 / Type A</strain>
    </source>
</reference>
<comment type="catalytic activity">
    <reaction evidence="1">
        <text>(S)-4-amino-5-oxopentanoate = 5-aminolevulinate</text>
        <dbReference type="Rhea" id="RHEA:14265"/>
        <dbReference type="ChEBI" id="CHEBI:57501"/>
        <dbReference type="ChEBI" id="CHEBI:356416"/>
        <dbReference type="EC" id="5.4.3.8"/>
    </reaction>
</comment>
<comment type="cofactor">
    <cofactor evidence="1">
        <name>pyridoxal 5'-phosphate</name>
        <dbReference type="ChEBI" id="CHEBI:597326"/>
    </cofactor>
</comment>
<comment type="pathway">
    <text evidence="1">Porphyrin-containing compound metabolism; protoporphyrin-IX biosynthesis; 5-aminolevulinate from L-glutamyl-tRNA(Glu): step 2/2.</text>
</comment>
<comment type="subunit">
    <text evidence="1">Homodimer.</text>
</comment>
<comment type="subcellular location">
    <subcellularLocation>
        <location evidence="1">Cytoplasm</location>
    </subcellularLocation>
</comment>
<comment type="similarity">
    <text evidence="1">Belongs to the class-III pyridoxal-phosphate-dependent aminotransferase family. HemL subfamily.</text>
</comment>
<comment type="sequence caution" evidence="2">
    <conflict type="erroneous initiation">
        <sequence resource="EMBL-CDS" id="BAB81138"/>
    </conflict>
</comment>
<accession>P0C2D9</accession>
<accession>Q9ZNC8</accession>
<dbReference type="EC" id="5.4.3.8" evidence="1"/>
<dbReference type="EMBL" id="BA000016">
    <property type="protein sequence ID" value="BAB81138.1"/>
    <property type="status" value="ALT_INIT"/>
    <property type="molecule type" value="Genomic_DNA"/>
</dbReference>
<dbReference type="SMR" id="P0C2D9"/>
<dbReference type="STRING" id="195102.gene:10490696"/>
<dbReference type="KEGG" id="cpe:CPE1432"/>
<dbReference type="HOGENOM" id="CLU_016922_1_5_9"/>
<dbReference type="UniPathway" id="UPA00251">
    <property type="reaction ID" value="UER00317"/>
</dbReference>
<dbReference type="Proteomes" id="UP000000818">
    <property type="component" value="Chromosome"/>
</dbReference>
<dbReference type="GO" id="GO:0005737">
    <property type="term" value="C:cytoplasm"/>
    <property type="evidence" value="ECO:0007669"/>
    <property type="project" value="UniProtKB-SubCell"/>
</dbReference>
<dbReference type="GO" id="GO:0042286">
    <property type="term" value="F:glutamate-1-semialdehyde 2,1-aminomutase activity"/>
    <property type="evidence" value="ECO:0007669"/>
    <property type="project" value="UniProtKB-UniRule"/>
</dbReference>
<dbReference type="GO" id="GO:0030170">
    <property type="term" value="F:pyridoxal phosphate binding"/>
    <property type="evidence" value="ECO:0007669"/>
    <property type="project" value="InterPro"/>
</dbReference>
<dbReference type="GO" id="GO:0008483">
    <property type="term" value="F:transaminase activity"/>
    <property type="evidence" value="ECO:0007669"/>
    <property type="project" value="InterPro"/>
</dbReference>
<dbReference type="GO" id="GO:0006782">
    <property type="term" value="P:protoporphyrinogen IX biosynthetic process"/>
    <property type="evidence" value="ECO:0007669"/>
    <property type="project" value="UniProtKB-UniRule"/>
</dbReference>
<dbReference type="CDD" id="cd00610">
    <property type="entry name" value="OAT_like"/>
    <property type="match status" value="1"/>
</dbReference>
<dbReference type="FunFam" id="3.40.640.10:FF:000021">
    <property type="entry name" value="Glutamate-1-semialdehyde 2,1-aminomutase"/>
    <property type="match status" value="1"/>
</dbReference>
<dbReference type="Gene3D" id="3.90.1150.10">
    <property type="entry name" value="Aspartate Aminotransferase, domain 1"/>
    <property type="match status" value="1"/>
</dbReference>
<dbReference type="Gene3D" id="3.40.640.10">
    <property type="entry name" value="Type I PLP-dependent aspartate aminotransferase-like (Major domain)"/>
    <property type="match status" value="1"/>
</dbReference>
<dbReference type="HAMAP" id="MF_00375">
    <property type="entry name" value="HemL_aminotrans_3"/>
    <property type="match status" value="1"/>
</dbReference>
<dbReference type="InterPro" id="IPR004639">
    <property type="entry name" value="4pyrrol_synth_GluAld_NH2Trfase"/>
</dbReference>
<dbReference type="InterPro" id="IPR005814">
    <property type="entry name" value="Aminotrans_3"/>
</dbReference>
<dbReference type="InterPro" id="IPR049704">
    <property type="entry name" value="Aminotrans_3_PPA_site"/>
</dbReference>
<dbReference type="InterPro" id="IPR015424">
    <property type="entry name" value="PyrdxlP-dep_Trfase"/>
</dbReference>
<dbReference type="InterPro" id="IPR015421">
    <property type="entry name" value="PyrdxlP-dep_Trfase_major"/>
</dbReference>
<dbReference type="InterPro" id="IPR015422">
    <property type="entry name" value="PyrdxlP-dep_Trfase_small"/>
</dbReference>
<dbReference type="NCBIfam" id="TIGR00713">
    <property type="entry name" value="hemL"/>
    <property type="match status" value="1"/>
</dbReference>
<dbReference type="NCBIfam" id="NF000818">
    <property type="entry name" value="PRK00062.1"/>
    <property type="match status" value="1"/>
</dbReference>
<dbReference type="PANTHER" id="PTHR43713">
    <property type="entry name" value="GLUTAMATE-1-SEMIALDEHYDE 2,1-AMINOMUTASE"/>
    <property type="match status" value="1"/>
</dbReference>
<dbReference type="PANTHER" id="PTHR43713:SF3">
    <property type="entry name" value="GLUTAMATE-1-SEMIALDEHYDE 2,1-AMINOMUTASE 1, CHLOROPLASTIC-RELATED"/>
    <property type="match status" value="1"/>
</dbReference>
<dbReference type="Pfam" id="PF00202">
    <property type="entry name" value="Aminotran_3"/>
    <property type="match status" value="1"/>
</dbReference>
<dbReference type="SUPFAM" id="SSF53383">
    <property type="entry name" value="PLP-dependent transferases"/>
    <property type="match status" value="1"/>
</dbReference>
<dbReference type="PROSITE" id="PS00600">
    <property type="entry name" value="AA_TRANSFER_CLASS_3"/>
    <property type="match status" value="1"/>
</dbReference>
<sequence length="425" mass="46881">MDRNKEIFEESKKYMPGGVNSPVRSFGSVGINPPVIKSGKGAMIKDENGNEYIDFVLAWGPMILGHCDEDVVEAIKKTSEESIAFGASTKLELDLAKLLCETLDNVDMIRMVNSGTEATMSAVKLARGYTKKDKIIKFAGCYHGHFDGFLIEAGSGVLTEGIPGCLGVPEESIKNTLIGIYNDEKQVEELFEKYGNDIAGIIIEPVAGNMGVVKCDPKFMRKLRELCDKYGALLIFDEVMCGFRVAYKGAQTLFDVKPDLVTYAKIMGGGLPCGAYGGRREIMENLSPLGGVYQAGTMSGNPIVMSAGLATVKKLYENPSYYNHIEKIGSKLEKGVLEIAKKKGLGLVVNRQGGMITLFFTDLKEVKCYDDVKTCDGERFKRYFLHMLNKGFNIPPSQFEAMFLSVKHTEEHIDKFLEAFETFEG</sequence>
<gene>
    <name evidence="1" type="primary">hemL</name>
    <name type="ordered locus">CPE1432</name>
</gene>
<feature type="chain" id="PRO_0000120402" description="Glutamate-1-semialdehyde 2,1-aminomutase">
    <location>
        <begin position="1"/>
        <end position="425"/>
    </location>
</feature>
<feature type="modified residue" description="N6-(pyridoxal phosphate)lysine" evidence="1">
    <location>
        <position position="265"/>
    </location>
</feature>
<keyword id="KW-0963">Cytoplasm</keyword>
<keyword id="KW-0413">Isomerase</keyword>
<keyword id="KW-0627">Porphyrin biosynthesis</keyword>
<keyword id="KW-0663">Pyridoxal phosphate</keyword>
<keyword id="KW-1185">Reference proteome</keyword>
<organism>
    <name type="scientific">Clostridium perfringens (strain 13 / Type A)</name>
    <dbReference type="NCBI Taxonomy" id="195102"/>
    <lineage>
        <taxon>Bacteria</taxon>
        <taxon>Bacillati</taxon>
        <taxon>Bacillota</taxon>
        <taxon>Clostridia</taxon>
        <taxon>Eubacteriales</taxon>
        <taxon>Clostridiaceae</taxon>
        <taxon>Clostridium</taxon>
    </lineage>
</organism>
<protein>
    <recommendedName>
        <fullName evidence="1">Glutamate-1-semialdehyde 2,1-aminomutase</fullName>
        <shortName evidence="1">GSA</shortName>
        <ecNumber evidence="1">5.4.3.8</ecNumber>
    </recommendedName>
    <alternativeName>
        <fullName evidence="1">Glutamate-1-semialdehyde aminotransferase</fullName>
        <shortName evidence="1">GSA-AT</shortName>
    </alternativeName>
</protein>
<name>GSA_CLOPE</name>